<reference key="1">
    <citation type="journal article" date="2008" name="Appl. Environ. Microbiol.">
        <title>Genome of the epsilonproteobacterial chemolithoautotroph Sulfurimonas denitrificans.</title>
        <authorList>
            <person name="Sievert S.M."/>
            <person name="Scott K.M."/>
            <person name="Klotz M.G."/>
            <person name="Chain P.S.G."/>
            <person name="Hauser L.J."/>
            <person name="Hemp J."/>
            <person name="Huegler M."/>
            <person name="Land M."/>
            <person name="Lapidus A."/>
            <person name="Larimer F.W."/>
            <person name="Lucas S."/>
            <person name="Malfatti S.A."/>
            <person name="Meyer F."/>
            <person name="Paulsen I.T."/>
            <person name="Ren Q."/>
            <person name="Simon J."/>
            <person name="Bailey K."/>
            <person name="Diaz E."/>
            <person name="Fitzpatrick K.A."/>
            <person name="Glover B."/>
            <person name="Gwatney N."/>
            <person name="Korajkic A."/>
            <person name="Long A."/>
            <person name="Mobberley J.M."/>
            <person name="Pantry S.N."/>
            <person name="Pazder G."/>
            <person name="Peterson S."/>
            <person name="Quintanilla J.D."/>
            <person name="Sprinkle R."/>
            <person name="Stephens J."/>
            <person name="Thomas P."/>
            <person name="Vaughn R."/>
            <person name="Weber M.J."/>
            <person name="Wooten L.L."/>
        </authorList>
    </citation>
    <scope>NUCLEOTIDE SEQUENCE [LARGE SCALE GENOMIC DNA]</scope>
    <source>
        <strain>ATCC 33889 / DSM 1251</strain>
    </source>
</reference>
<organism>
    <name type="scientific">Sulfurimonas denitrificans (strain ATCC 33889 / DSM 1251)</name>
    <name type="common">Thiomicrospira denitrificans (strain ATCC 33889 / DSM 1251)</name>
    <dbReference type="NCBI Taxonomy" id="326298"/>
    <lineage>
        <taxon>Bacteria</taxon>
        <taxon>Pseudomonadati</taxon>
        <taxon>Campylobacterota</taxon>
        <taxon>Epsilonproteobacteria</taxon>
        <taxon>Campylobacterales</taxon>
        <taxon>Sulfurimonadaceae</taxon>
        <taxon>Sulfurimonas</taxon>
    </lineage>
</organism>
<dbReference type="EC" id="6.1.1.14" evidence="1"/>
<dbReference type="EMBL" id="CP000153">
    <property type="protein sequence ID" value="ABB45131.1"/>
    <property type="molecule type" value="Genomic_DNA"/>
</dbReference>
<dbReference type="RefSeq" id="WP_011373471.1">
    <property type="nucleotide sequence ID" value="NC_007575.1"/>
</dbReference>
<dbReference type="SMR" id="Q30PF0"/>
<dbReference type="STRING" id="326298.Suden_1857"/>
<dbReference type="KEGG" id="tdn:Suden_1857"/>
<dbReference type="eggNOG" id="COG0752">
    <property type="taxonomic scope" value="Bacteria"/>
</dbReference>
<dbReference type="HOGENOM" id="CLU_057066_1_0_7"/>
<dbReference type="OrthoDB" id="9802183at2"/>
<dbReference type="Proteomes" id="UP000002714">
    <property type="component" value="Chromosome"/>
</dbReference>
<dbReference type="GO" id="GO:0005829">
    <property type="term" value="C:cytosol"/>
    <property type="evidence" value="ECO:0007669"/>
    <property type="project" value="TreeGrafter"/>
</dbReference>
<dbReference type="GO" id="GO:0005524">
    <property type="term" value="F:ATP binding"/>
    <property type="evidence" value="ECO:0007669"/>
    <property type="project" value="UniProtKB-UniRule"/>
</dbReference>
<dbReference type="GO" id="GO:0004820">
    <property type="term" value="F:glycine-tRNA ligase activity"/>
    <property type="evidence" value="ECO:0007669"/>
    <property type="project" value="UniProtKB-UniRule"/>
</dbReference>
<dbReference type="GO" id="GO:0006426">
    <property type="term" value="P:glycyl-tRNA aminoacylation"/>
    <property type="evidence" value="ECO:0007669"/>
    <property type="project" value="UniProtKB-UniRule"/>
</dbReference>
<dbReference type="CDD" id="cd00733">
    <property type="entry name" value="GlyRS_alpha_core"/>
    <property type="match status" value="1"/>
</dbReference>
<dbReference type="FunFam" id="3.30.930.10:FF:000006">
    <property type="entry name" value="Glycine--tRNA ligase alpha subunit"/>
    <property type="match status" value="1"/>
</dbReference>
<dbReference type="Gene3D" id="3.30.930.10">
    <property type="entry name" value="Bira Bifunctional Protein, Domain 2"/>
    <property type="match status" value="1"/>
</dbReference>
<dbReference type="Gene3D" id="1.20.58.180">
    <property type="entry name" value="Class II aaRS and biotin synthetases, domain 2"/>
    <property type="match status" value="1"/>
</dbReference>
<dbReference type="HAMAP" id="MF_00254">
    <property type="entry name" value="Gly_tRNA_synth_alpha"/>
    <property type="match status" value="1"/>
</dbReference>
<dbReference type="InterPro" id="IPR045864">
    <property type="entry name" value="aa-tRNA-synth_II/BPL/LPL"/>
</dbReference>
<dbReference type="InterPro" id="IPR006194">
    <property type="entry name" value="Gly-tRNA-synth_heterodimer"/>
</dbReference>
<dbReference type="InterPro" id="IPR002310">
    <property type="entry name" value="Gly-tRNA_ligase_asu"/>
</dbReference>
<dbReference type="NCBIfam" id="TIGR00388">
    <property type="entry name" value="glyQ"/>
    <property type="match status" value="1"/>
</dbReference>
<dbReference type="NCBIfam" id="NF006827">
    <property type="entry name" value="PRK09348.1"/>
    <property type="match status" value="1"/>
</dbReference>
<dbReference type="PANTHER" id="PTHR30075:SF2">
    <property type="entry name" value="GLYCINE--TRNA LIGASE, CHLOROPLASTIC_MITOCHONDRIAL 2"/>
    <property type="match status" value="1"/>
</dbReference>
<dbReference type="PANTHER" id="PTHR30075">
    <property type="entry name" value="GLYCYL-TRNA SYNTHETASE"/>
    <property type="match status" value="1"/>
</dbReference>
<dbReference type="Pfam" id="PF02091">
    <property type="entry name" value="tRNA-synt_2e"/>
    <property type="match status" value="1"/>
</dbReference>
<dbReference type="PRINTS" id="PR01044">
    <property type="entry name" value="TRNASYNTHGA"/>
</dbReference>
<dbReference type="SUPFAM" id="SSF55681">
    <property type="entry name" value="Class II aaRS and biotin synthetases"/>
    <property type="match status" value="1"/>
</dbReference>
<dbReference type="PROSITE" id="PS50861">
    <property type="entry name" value="AA_TRNA_LIGASE_II_GLYAB"/>
    <property type="match status" value="1"/>
</dbReference>
<protein>
    <recommendedName>
        <fullName evidence="1">Glycine--tRNA ligase alpha subunit</fullName>
        <ecNumber evidence="1">6.1.1.14</ecNumber>
    </recommendedName>
    <alternativeName>
        <fullName evidence="1">Glycyl-tRNA synthetase alpha subunit</fullName>
        <shortName evidence="1">GlyRS</shortName>
    </alternativeName>
</protein>
<sequence>MITFSSMLLKLQEFWMKQGCNIVQPYDIPAGAGTFHPATFLRSLDSTPWSVAYVAPSRRPTDGRYGENPNRLGSYYQFQALIKPSPDNIQELYLKSLEYLGLDVKNHDIRFVEDNWESPTLGAWGLGWEVWLNGMEVTQFTYFQQVGGIECNPVAVEITYGTERLAMYLQGVDTVFDIVWGENEHGKTLYRDVHKEAEIEFSKYNFEIADTEMLFAEFNAKSAECLKTIEARLPLPAYDLCMMAASTFNVLDARKAISQTERQNYILKIRELSKGCAELYKAQEEDRNKRVKG</sequence>
<comment type="catalytic activity">
    <reaction evidence="1">
        <text>tRNA(Gly) + glycine + ATP = glycyl-tRNA(Gly) + AMP + diphosphate</text>
        <dbReference type="Rhea" id="RHEA:16013"/>
        <dbReference type="Rhea" id="RHEA-COMP:9664"/>
        <dbReference type="Rhea" id="RHEA-COMP:9683"/>
        <dbReference type="ChEBI" id="CHEBI:30616"/>
        <dbReference type="ChEBI" id="CHEBI:33019"/>
        <dbReference type="ChEBI" id="CHEBI:57305"/>
        <dbReference type="ChEBI" id="CHEBI:78442"/>
        <dbReference type="ChEBI" id="CHEBI:78522"/>
        <dbReference type="ChEBI" id="CHEBI:456215"/>
        <dbReference type="EC" id="6.1.1.14"/>
    </reaction>
</comment>
<comment type="subunit">
    <text evidence="1">Tetramer of two alpha and two beta subunits.</text>
</comment>
<comment type="subcellular location">
    <subcellularLocation>
        <location evidence="1">Cytoplasm</location>
    </subcellularLocation>
</comment>
<comment type="similarity">
    <text evidence="1">Belongs to the class-II aminoacyl-tRNA synthetase family.</text>
</comment>
<evidence type="ECO:0000255" key="1">
    <source>
        <dbReference type="HAMAP-Rule" id="MF_00254"/>
    </source>
</evidence>
<proteinExistence type="inferred from homology"/>
<gene>
    <name evidence="1" type="primary">glyQ</name>
    <name type="ordered locus">Suden_1857</name>
</gene>
<name>SYGA_SULDN</name>
<keyword id="KW-0030">Aminoacyl-tRNA synthetase</keyword>
<keyword id="KW-0067">ATP-binding</keyword>
<keyword id="KW-0963">Cytoplasm</keyword>
<keyword id="KW-0436">Ligase</keyword>
<keyword id="KW-0547">Nucleotide-binding</keyword>
<keyword id="KW-0648">Protein biosynthesis</keyword>
<keyword id="KW-1185">Reference proteome</keyword>
<accession>Q30PF0</accession>
<feature type="chain" id="PRO_1000047524" description="Glycine--tRNA ligase alpha subunit">
    <location>
        <begin position="1"/>
        <end position="293"/>
    </location>
</feature>